<keyword id="KW-0223">Dioxygenase</keyword>
<keyword id="KW-0408">Iron</keyword>
<keyword id="KW-0479">Metal-binding</keyword>
<keyword id="KW-0560">Oxidoreductase</keyword>
<keyword id="KW-1185">Reference proteome</keyword>
<keyword id="KW-0847">Vitamin C</keyword>
<proteinExistence type="inferred from homology"/>
<sequence>MLVHVPNVLTPAEIALCRARLEAGEWIDGRATAGQQAARAKHNLQIPEDSDTARELGELILRALGRSPLFNAAALPLRVLPPLFNRYDVGMSFRNHVDGAVRAIPGAGMRLRADVSTTLFLTDPDAYEGGELVIEDTFGSHAVKLPAGDMIVYPATSLHRVEPITRGSRWSAFFWSQSMVKDDGRRALLFDLDQGITGVRRKLSDDDPAAIALTSCYHNLLRRWAEM</sequence>
<evidence type="ECO:0000255" key="1">
    <source>
        <dbReference type="HAMAP-Rule" id="MF_00657"/>
    </source>
</evidence>
<feature type="chain" id="PRO_1000147528" description="PKHD-type hydroxylase Mnod_1077">
    <location>
        <begin position="1"/>
        <end position="227"/>
    </location>
</feature>
<feature type="domain" description="Fe2OG dioxygenase" evidence="1">
    <location>
        <begin position="78"/>
        <end position="178"/>
    </location>
</feature>
<feature type="binding site" evidence="1">
    <location>
        <position position="96"/>
    </location>
    <ligand>
        <name>Fe cation</name>
        <dbReference type="ChEBI" id="CHEBI:24875"/>
    </ligand>
</feature>
<feature type="binding site" evidence="1">
    <location>
        <position position="98"/>
    </location>
    <ligand>
        <name>Fe cation</name>
        <dbReference type="ChEBI" id="CHEBI:24875"/>
    </ligand>
</feature>
<feature type="binding site" evidence="1">
    <location>
        <position position="159"/>
    </location>
    <ligand>
        <name>Fe cation</name>
        <dbReference type="ChEBI" id="CHEBI:24875"/>
    </ligand>
</feature>
<feature type="binding site" evidence="1">
    <location>
        <position position="169"/>
    </location>
    <ligand>
        <name>2-oxoglutarate</name>
        <dbReference type="ChEBI" id="CHEBI:16810"/>
    </ligand>
</feature>
<comment type="cofactor">
    <cofactor evidence="1">
        <name>Fe(2+)</name>
        <dbReference type="ChEBI" id="CHEBI:29033"/>
    </cofactor>
    <text evidence="1">Binds 1 Fe(2+) ion per subunit.</text>
</comment>
<comment type="cofactor">
    <cofactor evidence="1">
        <name>L-ascorbate</name>
        <dbReference type="ChEBI" id="CHEBI:38290"/>
    </cofactor>
</comment>
<protein>
    <recommendedName>
        <fullName evidence="1">PKHD-type hydroxylase Mnod_1077</fullName>
        <ecNumber evidence="1">1.14.11.-</ecNumber>
    </recommendedName>
</protein>
<accession>B8IJ69</accession>
<reference key="1">
    <citation type="submission" date="2009-01" db="EMBL/GenBank/DDBJ databases">
        <title>Complete sequence of chromosome of Methylobacterium nodulans ORS 2060.</title>
        <authorList>
            <consortium name="US DOE Joint Genome Institute"/>
            <person name="Lucas S."/>
            <person name="Copeland A."/>
            <person name="Lapidus A."/>
            <person name="Glavina del Rio T."/>
            <person name="Dalin E."/>
            <person name="Tice H."/>
            <person name="Bruce D."/>
            <person name="Goodwin L."/>
            <person name="Pitluck S."/>
            <person name="Sims D."/>
            <person name="Brettin T."/>
            <person name="Detter J.C."/>
            <person name="Han C."/>
            <person name="Larimer F."/>
            <person name="Land M."/>
            <person name="Hauser L."/>
            <person name="Kyrpides N."/>
            <person name="Ivanova N."/>
            <person name="Marx C.J."/>
            <person name="Richardson P."/>
        </authorList>
    </citation>
    <scope>NUCLEOTIDE SEQUENCE [LARGE SCALE GENOMIC DNA]</scope>
    <source>
        <strain>LMG 21967 / CNCM I-2342 / ORS 2060</strain>
    </source>
</reference>
<gene>
    <name type="ordered locus">Mnod_1077</name>
</gene>
<dbReference type="EC" id="1.14.11.-" evidence="1"/>
<dbReference type="EMBL" id="CP001349">
    <property type="protein sequence ID" value="ACL56084.1"/>
    <property type="molecule type" value="Genomic_DNA"/>
</dbReference>
<dbReference type="RefSeq" id="WP_015927782.1">
    <property type="nucleotide sequence ID" value="NC_011894.1"/>
</dbReference>
<dbReference type="SMR" id="B8IJ69"/>
<dbReference type="STRING" id="460265.Mnod_1077"/>
<dbReference type="KEGG" id="mno:Mnod_1077"/>
<dbReference type="eggNOG" id="COG3128">
    <property type="taxonomic scope" value="Bacteria"/>
</dbReference>
<dbReference type="HOGENOM" id="CLU_106663_0_0_5"/>
<dbReference type="OrthoDB" id="9812472at2"/>
<dbReference type="Proteomes" id="UP000008207">
    <property type="component" value="Chromosome"/>
</dbReference>
<dbReference type="GO" id="GO:0016706">
    <property type="term" value="F:2-oxoglutarate-dependent dioxygenase activity"/>
    <property type="evidence" value="ECO:0007669"/>
    <property type="project" value="UniProtKB-UniRule"/>
</dbReference>
<dbReference type="GO" id="GO:0005506">
    <property type="term" value="F:iron ion binding"/>
    <property type="evidence" value="ECO:0007669"/>
    <property type="project" value="UniProtKB-UniRule"/>
</dbReference>
<dbReference type="GO" id="GO:0031418">
    <property type="term" value="F:L-ascorbic acid binding"/>
    <property type="evidence" value="ECO:0007669"/>
    <property type="project" value="UniProtKB-KW"/>
</dbReference>
<dbReference type="GO" id="GO:0006974">
    <property type="term" value="P:DNA damage response"/>
    <property type="evidence" value="ECO:0007669"/>
    <property type="project" value="TreeGrafter"/>
</dbReference>
<dbReference type="GO" id="GO:0006879">
    <property type="term" value="P:intracellular iron ion homeostasis"/>
    <property type="evidence" value="ECO:0007669"/>
    <property type="project" value="TreeGrafter"/>
</dbReference>
<dbReference type="Gene3D" id="2.60.120.620">
    <property type="entry name" value="q2cbj1_9rhob like domain"/>
    <property type="match status" value="1"/>
</dbReference>
<dbReference type="Gene3D" id="4.10.860.20">
    <property type="entry name" value="Rabenosyn, Rab binding domain"/>
    <property type="match status" value="1"/>
</dbReference>
<dbReference type="HAMAP" id="MF_00657">
    <property type="entry name" value="Hydroxyl_YbiX"/>
    <property type="match status" value="1"/>
</dbReference>
<dbReference type="InterPro" id="IPR005123">
    <property type="entry name" value="Oxoglu/Fe-dep_dioxygenase_dom"/>
</dbReference>
<dbReference type="InterPro" id="IPR041097">
    <property type="entry name" value="PKHD_C"/>
</dbReference>
<dbReference type="InterPro" id="IPR023550">
    <property type="entry name" value="PKHD_hydroxylase"/>
</dbReference>
<dbReference type="InterPro" id="IPR006620">
    <property type="entry name" value="Pro_4_hyd_alph"/>
</dbReference>
<dbReference type="InterPro" id="IPR044862">
    <property type="entry name" value="Pro_4_hyd_alph_FE2OG_OXY"/>
</dbReference>
<dbReference type="NCBIfam" id="NF003974">
    <property type="entry name" value="PRK05467.1-3"/>
    <property type="match status" value="1"/>
</dbReference>
<dbReference type="NCBIfam" id="NF003975">
    <property type="entry name" value="PRK05467.1-4"/>
    <property type="match status" value="1"/>
</dbReference>
<dbReference type="PANTHER" id="PTHR41536">
    <property type="entry name" value="PKHD-TYPE HYDROXYLASE YBIX"/>
    <property type="match status" value="1"/>
</dbReference>
<dbReference type="PANTHER" id="PTHR41536:SF1">
    <property type="entry name" value="PKHD-TYPE HYDROXYLASE YBIX"/>
    <property type="match status" value="1"/>
</dbReference>
<dbReference type="Pfam" id="PF13640">
    <property type="entry name" value="2OG-FeII_Oxy_3"/>
    <property type="match status" value="1"/>
</dbReference>
<dbReference type="Pfam" id="PF18331">
    <property type="entry name" value="PKHD_C"/>
    <property type="match status" value="1"/>
</dbReference>
<dbReference type="SMART" id="SM00702">
    <property type="entry name" value="P4Hc"/>
    <property type="match status" value="1"/>
</dbReference>
<dbReference type="SUPFAM" id="SSF51197">
    <property type="entry name" value="Clavaminate synthase-like"/>
    <property type="match status" value="1"/>
</dbReference>
<dbReference type="PROSITE" id="PS51471">
    <property type="entry name" value="FE2OG_OXY"/>
    <property type="match status" value="1"/>
</dbReference>
<organism>
    <name type="scientific">Methylobacterium nodulans (strain LMG 21967 / CNCM I-2342 / ORS 2060)</name>
    <dbReference type="NCBI Taxonomy" id="460265"/>
    <lineage>
        <taxon>Bacteria</taxon>
        <taxon>Pseudomonadati</taxon>
        <taxon>Pseudomonadota</taxon>
        <taxon>Alphaproteobacteria</taxon>
        <taxon>Hyphomicrobiales</taxon>
        <taxon>Methylobacteriaceae</taxon>
        <taxon>Methylobacterium</taxon>
    </lineage>
</organism>
<name>Y1077_METNO</name>